<organism>
    <name type="scientific">Yersinia pseudotuberculosis serotype I (strain IP32953)</name>
    <dbReference type="NCBI Taxonomy" id="273123"/>
    <lineage>
        <taxon>Bacteria</taxon>
        <taxon>Pseudomonadati</taxon>
        <taxon>Pseudomonadota</taxon>
        <taxon>Gammaproteobacteria</taxon>
        <taxon>Enterobacterales</taxon>
        <taxon>Yersiniaceae</taxon>
        <taxon>Yersinia</taxon>
    </lineage>
</organism>
<protein>
    <recommendedName>
        <fullName evidence="1">Large ribosomal subunit protein uL30</fullName>
    </recommendedName>
    <alternativeName>
        <fullName evidence="2">50S ribosomal protein L30</fullName>
    </alternativeName>
</protein>
<evidence type="ECO:0000255" key="1">
    <source>
        <dbReference type="HAMAP-Rule" id="MF_01371"/>
    </source>
</evidence>
<evidence type="ECO:0000305" key="2"/>
<reference key="1">
    <citation type="journal article" date="2004" name="Proc. Natl. Acad. Sci. U.S.A.">
        <title>Insights into the evolution of Yersinia pestis through whole-genome comparison with Yersinia pseudotuberculosis.</title>
        <authorList>
            <person name="Chain P.S.G."/>
            <person name="Carniel E."/>
            <person name="Larimer F.W."/>
            <person name="Lamerdin J."/>
            <person name="Stoutland P.O."/>
            <person name="Regala W.M."/>
            <person name="Georgescu A.M."/>
            <person name="Vergez L.M."/>
            <person name="Land M.L."/>
            <person name="Motin V.L."/>
            <person name="Brubaker R.R."/>
            <person name="Fowler J."/>
            <person name="Hinnebusch J."/>
            <person name="Marceau M."/>
            <person name="Medigue C."/>
            <person name="Simonet M."/>
            <person name="Chenal-Francisque V."/>
            <person name="Souza B."/>
            <person name="Dacheux D."/>
            <person name="Elliott J.M."/>
            <person name="Derbise A."/>
            <person name="Hauser L.J."/>
            <person name="Garcia E."/>
        </authorList>
    </citation>
    <scope>NUCLEOTIDE SEQUENCE [LARGE SCALE GENOMIC DNA]</scope>
    <source>
        <strain>IP32953</strain>
    </source>
</reference>
<gene>
    <name evidence="1" type="primary">rpmD</name>
    <name type="ordered locus">YPTB3680</name>
</gene>
<feature type="chain" id="PRO_0000273899" description="Large ribosomal subunit protein uL30">
    <location>
        <begin position="1"/>
        <end position="59"/>
    </location>
</feature>
<proteinExistence type="inferred from homology"/>
<dbReference type="EMBL" id="BX936398">
    <property type="protein sequence ID" value="CAH22918.1"/>
    <property type="molecule type" value="Genomic_DNA"/>
</dbReference>
<dbReference type="RefSeq" id="WP_002213339.1">
    <property type="nucleotide sequence ID" value="NZ_CP009712.1"/>
</dbReference>
<dbReference type="SMR" id="Q664T9"/>
<dbReference type="GeneID" id="97454249"/>
<dbReference type="KEGG" id="ypo:BZ17_2907"/>
<dbReference type="KEGG" id="yps:YPTB3680"/>
<dbReference type="PATRIC" id="fig|273123.14.peg.3048"/>
<dbReference type="Proteomes" id="UP000001011">
    <property type="component" value="Chromosome"/>
</dbReference>
<dbReference type="GO" id="GO:0022625">
    <property type="term" value="C:cytosolic large ribosomal subunit"/>
    <property type="evidence" value="ECO:0007669"/>
    <property type="project" value="TreeGrafter"/>
</dbReference>
<dbReference type="GO" id="GO:0003735">
    <property type="term" value="F:structural constituent of ribosome"/>
    <property type="evidence" value="ECO:0007669"/>
    <property type="project" value="InterPro"/>
</dbReference>
<dbReference type="GO" id="GO:0006412">
    <property type="term" value="P:translation"/>
    <property type="evidence" value="ECO:0007669"/>
    <property type="project" value="UniProtKB-UniRule"/>
</dbReference>
<dbReference type="CDD" id="cd01658">
    <property type="entry name" value="Ribosomal_L30"/>
    <property type="match status" value="1"/>
</dbReference>
<dbReference type="FunFam" id="3.30.1390.20:FF:000001">
    <property type="entry name" value="50S ribosomal protein L30"/>
    <property type="match status" value="1"/>
</dbReference>
<dbReference type="Gene3D" id="3.30.1390.20">
    <property type="entry name" value="Ribosomal protein L30, ferredoxin-like fold domain"/>
    <property type="match status" value="1"/>
</dbReference>
<dbReference type="HAMAP" id="MF_01371_B">
    <property type="entry name" value="Ribosomal_uL30_B"/>
    <property type="match status" value="1"/>
</dbReference>
<dbReference type="InterPro" id="IPR036919">
    <property type="entry name" value="Ribo_uL30_ferredoxin-like_sf"/>
</dbReference>
<dbReference type="InterPro" id="IPR005996">
    <property type="entry name" value="Ribosomal_uL30_bac-type"/>
</dbReference>
<dbReference type="InterPro" id="IPR018038">
    <property type="entry name" value="Ribosomal_uL30_CS"/>
</dbReference>
<dbReference type="InterPro" id="IPR016082">
    <property type="entry name" value="Ribosomal_uL30_ferredoxin-like"/>
</dbReference>
<dbReference type="NCBIfam" id="TIGR01308">
    <property type="entry name" value="rpmD_bact"/>
    <property type="match status" value="1"/>
</dbReference>
<dbReference type="PANTHER" id="PTHR15892:SF2">
    <property type="entry name" value="LARGE RIBOSOMAL SUBUNIT PROTEIN UL30M"/>
    <property type="match status" value="1"/>
</dbReference>
<dbReference type="PANTHER" id="PTHR15892">
    <property type="entry name" value="MITOCHONDRIAL RIBOSOMAL PROTEIN L30"/>
    <property type="match status" value="1"/>
</dbReference>
<dbReference type="Pfam" id="PF00327">
    <property type="entry name" value="Ribosomal_L30"/>
    <property type="match status" value="1"/>
</dbReference>
<dbReference type="PIRSF" id="PIRSF002211">
    <property type="entry name" value="Ribosomal_L30_bac-type"/>
    <property type="match status" value="1"/>
</dbReference>
<dbReference type="SUPFAM" id="SSF55129">
    <property type="entry name" value="Ribosomal protein L30p/L7e"/>
    <property type="match status" value="1"/>
</dbReference>
<dbReference type="PROSITE" id="PS00634">
    <property type="entry name" value="RIBOSOMAL_L30"/>
    <property type="match status" value="1"/>
</dbReference>
<comment type="subunit">
    <text evidence="1">Part of the 50S ribosomal subunit.</text>
</comment>
<comment type="similarity">
    <text evidence="1">Belongs to the universal ribosomal protein uL30 family.</text>
</comment>
<sequence length="59" mass="6546">MAKTIKVTQTKSSIGRLPKHKATLIGLGLRRIGHTVEREDTPAVRGMVNLVSYMVKVEE</sequence>
<keyword id="KW-0687">Ribonucleoprotein</keyword>
<keyword id="KW-0689">Ribosomal protein</keyword>
<name>RL30_YERPS</name>
<accession>Q664T9</accession>